<dbReference type="EC" id="2.7.11.1" evidence="21 25"/>
<dbReference type="EMBL" id="AF053941">
    <property type="protein sequence ID" value="AAC27293.2"/>
    <property type="molecule type" value="mRNA"/>
</dbReference>
<dbReference type="EMBL" id="AB019228">
    <property type="protein sequence ID" value="BAB09904.1"/>
    <property type="molecule type" value="Genomic_DNA"/>
</dbReference>
<dbReference type="EMBL" id="AB024029">
    <property type="protein sequence ID" value="BAB09904.1"/>
    <property type="status" value="JOINED"/>
    <property type="molecule type" value="Genomic_DNA"/>
</dbReference>
<dbReference type="EMBL" id="CP002688">
    <property type="protein sequence ID" value="AED97002.1"/>
    <property type="molecule type" value="Genomic_DNA"/>
</dbReference>
<dbReference type="EMBL" id="CP002688">
    <property type="protein sequence ID" value="AED97004.1"/>
    <property type="molecule type" value="Genomic_DNA"/>
</dbReference>
<dbReference type="EMBL" id="CP002688">
    <property type="protein sequence ID" value="ANM68619.1"/>
    <property type="molecule type" value="Genomic_DNA"/>
</dbReference>
<dbReference type="EMBL" id="CP002688">
    <property type="protein sequence ID" value="ANM68620.1"/>
    <property type="molecule type" value="Genomic_DNA"/>
</dbReference>
<dbReference type="EMBL" id="CP002688">
    <property type="protein sequence ID" value="ANM68621.1"/>
    <property type="molecule type" value="Genomic_DNA"/>
</dbReference>
<dbReference type="EMBL" id="AY093141">
    <property type="protein sequence ID" value="AAM13140.1"/>
    <property type="molecule type" value="mRNA"/>
</dbReference>
<dbReference type="EMBL" id="BT008901">
    <property type="protein sequence ID" value="AAP68340.1"/>
    <property type="molecule type" value="mRNA"/>
</dbReference>
<dbReference type="EMBL" id="U79744">
    <property type="protein sequence ID" value="AAB39188.1"/>
    <property type="molecule type" value="mRNA"/>
</dbReference>
<dbReference type="PIR" id="T51600">
    <property type="entry name" value="T51600"/>
</dbReference>
<dbReference type="RefSeq" id="NP_001318824.1">
    <molecule id="P93025-1"/>
    <property type="nucleotide sequence ID" value="NM_001345288.1"/>
</dbReference>
<dbReference type="RefSeq" id="NP_001330355.1">
    <molecule id="P93025-1"/>
    <property type="nucleotide sequence ID" value="NM_001345289.1"/>
</dbReference>
<dbReference type="RefSeq" id="NP_001330356.1">
    <molecule id="P93025-1"/>
    <property type="nucleotide sequence ID" value="NM_001345290.1"/>
</dbReference>
<dbReference type="RefSeq" id="NP_851210.1">
    <molecule id="P93025-1"/>
    <property type="nucleotide sequence ID" value="NM_180879.2"/>
</dbReference>
<dbReference type="RefSeq" id="NP_851211.1">
    <molecule id="P93025-1"/>
    <property type="nucleotide sequence ID" value="NM_180880.2"/>
</dbReference>
<dbReference type="PDB" id="2Z6D">
    <property type="method" value="X-ray"/>
    <property type="resolution" value="2.00 A"/>
    <property type="chains" value="A/B=117-246"/>
</dbReference>
<dbReference type="PDB" id="4EEP">
    <property type="method" value="X-ray"/>
    <property type="resolution" value="1.70 A"/>
    <property type="chains" value="A=385-496"/>
</dbReference>
<dbReference type="PDB" id="4EER">
    <property type="method" value="X-ray"/>
    <property type="resolution" value="1.75 A"/>
    <property type="chains" value="A=385-496"/>
</dbReference>
<dbReference type="PDB" id="4EES">
    <property type="method" value="X-ray"/>
    <property type="resolution" value="1.80 A"/>
    <property type="chains" value="A=385-496"/>
</dbReference>
<dbReference type="PDB" id="4EET">
    <property type="method" value="X-ray"/>
    <property type="resolution" value="1.20 A"/>
    <property type="chains" value="B/D=385-496"/>
</dbReference>
<dbReference type="PDB" id="4EEU">
    <property type="method" value="X-ray"/>
    <property type="resolution" value="1.41 A"/>
    <property type="chains" value="A=385-496"/>
</dbReference>
<dbReference type="PDB" id="4NXB">
    <property type="method" value="X-ray"/>
    <property type="resolution" value="2.56 A"/>
    <property type="chains" value="A/B=388-496"/>
</dbReference>
<dbReference type="PDB" id="4NXE">
    <property type="method" value="X-ray"/>
    <property type="resolution" value="2.10 A"/>
    <property type="chains" value="A/B=388-496"/>
</dbReference>
<dbReference type="PDB" id="4NXF">
    <property type="method" value="X-ray"/>
    <property type="resolution" value="1.77 A"/>
    <property type="chains" value="A/B=388-496"/>
</dbReference>
<dbReference type="PDB" id="4NXG">
    <property type="method" value="X-ray"/>
    <property type="resolution" value="2.09 A"/>
    <property type="chains" value="A/B=388-496"/>
</dbReference>
<dbReference type="PDB" id="6GPU">
    <property type="method" value="X-ray"/>
    <property type="resolution" value="1.17 A"/>
    <property type="chains" value="A=387-492"/>
</dbReference>
<dbReference type="PDB" id="6GPV">
    <property type="method" value="X-ray"/>
    <property type="resolution" value="2.00 A"/>
    <property type="chains" value="A=387-492"/>
</dbReference>
<dbReference type="PDB" id="6QQH">
    <property type="method" value="X-ray"/>
    <property type="resolution" value="1.38 A"/>
    <property type="chains" value="A=387-507"/>
</dbReference>
<dbReference type="PDB" id="6QQI">
    <property type="method" value="X-ray"/>
    <property type="resolution" value="1.70 A"/>
    <property type="chains" value="A=387-507"/>
</dbReference>
<dbReference type="PDB" id="6QQJ">
    <property type="method" value="X-ray"/>
    <property type="resolution" value="2.08 A"/>
    <property type="chains" value="A=387-507"/>
</dbReference>
<dbReference type="PDB" id="6QQK">
    <property type="method" value="X-ray"/>
    <property type="resolution" value="2.40 A"/>
    <property type="chains" value="A=387-507"/>
</dbReference>
<dbReference type="PDB" id="6QSA">
    <property type="method" value="X-ray"/>
    <property type="resolution" value="1.70 A"/>
    <property type="chains" value="A=387-507"/>
</dbReference>
<dbReference type="PDB" id="6S45">
    <property type="method" value="X-ray"/>
    <property type="resolution" value="2.20 A"/>
    <property type="chains" value="A=387-492"/>
</dbReference>
<dbReference type="PDB" id="6S46">
    <property type="method" value="X-ray"/>
    <property type="resolution" value="2.75 A"/>
    <property type="chains" value="A=387-492"/>
</dbReference>
<dbReference type="PDB" id="7ABY">
    <property type="method" value="X-ray"/>
    <property type="resolution" value="1.45 A"/>
    <property type="chains" value="A=387-496"/>
</dbReference>
<dbReference type="PDB" id="8A2V">
    <property type="method" value="X-ray"/>
    <property type="resolution" value="1.59 A"/>
    <property type="chains" value="A=387-492"/>
</dbReference>
<dbReference type="PDB" id="8A2W">
    <property type="method" value="X-ray"/>
    <property type="resolution" value="2.04 A"/>
    <property type="chains" value="A/B=387-492"/>
</dbReference>
<dbReference type="PDB" id="8A4E">
    <property type="method" value="X-ray"/>
    <property type="resolution" value="1.96 A"/>
    <property type="chains" value="A=387-492"/>
</dbReference>
<dbReference type="PDBsum" id="2Z6D"/>
<dbReference type="PDBsum" id="4EEP"/>
<dbReference type="PDBsum" id="4EER"/>
<dbReference type="PDBsum" id="4EES"/>
<dbReference type="PDBsum" id="4EET"/>
<dbReference type="PDBsum" id="4EEU"/>
<dbReference type="PDBsum" id="4NXB"/>
<dbReference type="PDBsum" id="4NXE"/>
<dbReference type="PDBsum" id="4NXF"/>
<dbReference type="PDBsum" id="4NXG"/>
<dbReference type="PDBsum" id="6GPU"/>
<dbReference type="PDBsum" id="6GPV"/>
<dbReference type="PDBsum" id="6QQH"/>
<dbReference type="PDBsum" id="6QQI"/>
<dbReference type="PDBsum" id="6QQJ"/>
<dbReference type="PDBsum" id="6QQK"/>
<dbReference type="PDBsum" id="6QSA"/>
<dbReference type="PDBsum" id="6S45"/>
<dbReference type="PDBsum" id="6S46"/>
<dbReference type="PDBsum" id="7ABY"/>
<dbReference type="PDBsum" id="8A2V"/>
<dbReference type="PDBsum" id="8A2W"/>
<dbReference type="PDBsum" id="8A4E"/>
<dbReference type="SMR" id="P93025"/>
<dbReference type="BioGRID" id="21170">
    <property type="interactions" value="12"/>
</dbReference>
<dbReference type="DIP" id="DIP-53468N"/>
<dbReference type="FunCoup" id="P93025">
    <property type="interactions" value="919"/>
</dbReference>
<dbReference type="IntAct" id="P93025">
    <property type="interactions" value="4"/>
</dbReference>
<dbReference type="MINT" id="P93025"/>
<dbReference type="STRING" id="3702.P93025"/>
<dbReference type="GlyGen" id="P93025">
    <property type="glycosylation" value="1 site"/>
</dbReference>
<dbReference type="iPTMnet" id="P93025"/>
<dbReference type="PaxDb" id="3702-AT5G58140.2"/>
<dbReference type="ProteomicsDB" id="235062">
    <molecule id="P93025-1"/>
</dbReference>
<dbReference type="EnsemblPlants" id="AT5G58140.1">
    <molecule id="P93025-1"/>
    <property type="protein sequence ID" value="AT5G58140.1"/>
    <property type="gene ID" value="AT5G58140"/>
</dbReference>
<dbReference type="EnsemblPlants" id="AT5G58140.2">
    <molecule id="P93025-1"/>
    <property type="protein sequence ID" value="AT5G58140.2"/>
    <property type="gene ID" value="AT5G58140"/>
</dbReference>
<dbReference type="EnsemblPlants" id="AT5G58140.5">
    <molecule id="P93025-1"/>
    <property type="protein sequence ID" value="AT5G58140.5"/>
    <property type="gene ID" value="AT5G58140"/>
</dbReference>
<dbReference type="EnsemblPlants" id="AT5G58140.6">
    <molecule id="P93025-1"/>
    <property type="protein sequence ID" value="AT5G58140.6"/>
    <property type="gene ID" value="AT5G58140"/>
</dbReference>
<dbReference type="EnsemblPlants" id="AT5G58140.7">
    <molecule id="P93025-1"/>
    <property type="protein sequence ID" value="AT5G58140.7"/>
    <property type="gene ID" value="AT5G58140"/>
</dbReference>
<dbReference type="GeneID" id="835926"/>
<dbReference type="Gramene" id="AT5G58140.1">
    <molecule id="P93025-1"/>
    <property type="protein sequence ID" value="AT5G58140.1"/>
    <property type="gene ID" value="AT5G58140"/>
</dbReference>
<dbReference type="Gramene" id="AT5G58140.2">
    <molecule id="P93025-1"/>
    <property type="protein sequence ID" value="AT5G58140.2"/>
    <property type="gene ID" value="AT5G58140"/>
</dbReference>
<dbReference type="Gramene" id="AT5G58140.5">
    <molecule id="P93025-1"/>
    <property type="protein sequence ID" value="AT5G58140.5"/>
    <property type="gene ID" value="AT5G58140"/>
</dbReference>
<dbReference type="Gramene" id="AT5G58140.6">
    <molecule id="P93025-1"/>
    <property type="protein sequence ID" value="AT5G58140.6"/>
    <property type="gene ID" value="AT5G58140"/>
</dbReference>
<dbReference type="Gramene" id="AT5G58140.7">
    <molecule id="P93025-1"/>
    <property type="protein sequence ID" value="AT5G58140.7"/>
    <property type="gene ID" value="AT5G58140"/>
</dbReference>
<dbReference type="KEGG" id="ath:AT5G58140"/>
<dbReference type="Araport" id="AT5G58140"/>
<dbReference type="TAIR" id="AT5G58140">
    <property type="gene designation" value="PHOT2"/>
</dbReference>
<dbReference type="eggNOG" id="ENOG502QPPH">
    <property type="taxonomic scope" value="Eukaryota"/>
</dbReference>
<dbReference type="HOGENOM" id="CLU_006321_0_1_1"/>
<dbReference type="InParanoid" id="P93025"/>
<dbReference type="OrthoDB" id="432483at2759"/>
<dbReference type="PhylomeDB" id="P93025"/>
<dbReference type="EvolutionaryTrace" id="P93025"/>
<dbReference type="PRO" id="PR:P93025"/>
<dbReference type="Proteomes" id="UP000006548">
    <property type="component" value="Chromosome 5"/>
</dbReference>
<dbReference type="ExpressionAtlas" id="P93025">
    <property type="expression patterns" value="baseline and differential"/>
</dbReference>
<dbReference type="GO" id="GO:0005794">
    <property type="term" value="C:Golgi apparatus"/>
    <property type="evidence" value="ECO:0000314"/>
    <property type="project" value="TAIR"/>
</dbReference>
<dbReference type="GO" id="GO:0016020">
    <property type="term" value="C:membrane"/>
    <property type="evidence" value="ECO:0000250"/>
    <property type="project" value="TAIR"/>
</dbReference>
<dbReference type="GO" id="GO:0005886">
    <property type="term" value="C:plasma membrane"/>
    <property type="evidence" value="ECO:0007005"/>
    <property type="project" value="TAIR"/>
</dbReference>
<dbReference type="GO" id="GO:0009536">
    <property type="term" value="C:plastid"/>
    <property type="evidence" value="ECO:0007005"/>
    <property type="project" value="TAIR"/>
</dbReference>
<dbReference type="GO" id="GO:0005524">
    <property type="term" value="F:ATP binding"/>
    <property type="evidence" value="ECO:0007669"/>
    <property type="project" value="UniProtKB-KW"/>
</dbReference>
<dbReference type="GO" id="GO:0009882">
    <property type="term" value="F:blue light photoreceptor activity"/>
    <property type="evidence" value="ECO:0000315"/>
    <property type="project" value="TAIR"/>
</dbReference>
<dbReference type="GO" id="GO:0010181">
    <property type="term" value="F:FMN binding"/>
    <property type="evidence" value="ECO:0000314"/>
    <property type="project" value="UniProtKB"/>
</dbReference>
<dbReference type="GO" id="GO:0042802">
    <property type="term" value="F:identical protein binding"/>
    <property type="evidence" value="ECO:0000353"/>
    <property type="project" value="UniProtKB"/>
</dbReference>
<dbReference type="GO" id="GO:0016301">
    <property type="term" value="F:kinase activity"/>
    <property type="evidence" value="ECO:0000250"/>
    <property type="project" value="TAIR"/>
</dbReference>
<dbReference type="GO" id="GO:0106310">
    <property type="term" value="F:protein serine kinase activity"/>
    <property type="evidence" value="ECO:0007669"/>
    <property type="project" value="RHEA"/>
</dbReference>
<dbReference type="GO" id="GO:0004674">
    <property type="term" value="F:protein serine/threonine kinase activity"/>
    <property type="evidence" value="ECO:0000314"/>
    <property type="project" value="TAIR"/>
</dbReference>
<dbReference type="GO" id="GO:0009902">
    <property type="term" value="P:chloroplast relocation"/>
    <property type="evidence" value="ECO:0000304"/>
    <property type="project" value="TAIR"/>
</dbReference>
<dbReference type="GO" id="GO:0007623">
    <property type="term" value="P:circadian rhythm"/>
    <property type="evidence" value="ECO:0000315"/>
    <property type="project" value="TAIR"/>
</dbReference>
<dbReference type="GO" id="GO:0009638">
    <property type="term" value="P:phototropism"/>
    <property type="evidence" value="ECO:0000315"/>
    <property type="project" value="TAIR"/>
</dbReference>
<dbReference type="GO" id="GO:0046777">
    <property type="term" value="P:protein autophosphorylation"/>
    <property type="evidence" value="ECO:0000304"/>
    <property type="project" value="TAIR"/>
</dbReference>
<dbReference type="GO" id="GO:0009637">
    <property type="term" value="P:response to blue light"/>
    <property type="evidence" value="ECO:0000315"/>
    <property type="project" value="UniProtKB"/>
</dbReference>
<dbReference type="GO" id="GO:0010118">
    <property type="term" value="P:stomatal movement"/>
    <property type="evidence" value="ECO:0000315"/>
    <property type="project" value="TAIR"/>
</dbReference>
<dbReference type="CDD" id="cd00130">
    <property type="entry name" value="PAS"/>
    <property type="match status" value="2"/>
</dbReference>
<dbReference type="CDD" id="cd05574">
    <property type="entry name" value="STKc_phototropin_like"/>
    <property type="match status" value="1"/>
</dbReference>
<dbReference type="FunFam" id="3.30.200.20:FF:000133">
    <property type="entry name" value="LOV domain-containing protein"/>
    <property type="match status" value="1"/>
</dbReference>
<dbReference type="FunFam" id="3.30.450.20:FF:000002">
    <property type="entry name" value="LOV domain-containing protein"/>
    <property type="match status" value="1"/>
</dbReference>
<dbReference type="FunFam" id="1.10.510.10:FF:000265">
    <property type="entry name" value="Putative LOV domain-containing protein"/>
    <property type="match status" value="1"/>
</dbReference>
<dbReference type="FunFam" id="3.30.450.20:FF:000036">
    <property type="entry name" value="Putative LOV domain-containing protein"/>
    <property type="match status" value="1"/>
</dbReference>
<dbReference type="Gene3D" id="3.30.450.20">
    <property type="entry name" value="PAS domain"/>
    <property type="match status" value="2"/>
</dbReference>
<dbReference type="Gene3D" id="3.30.200.20">
    <property type="entry name" value="Phosphorylase Kinase, domain 1"/>
    <property type="match status" value="1"/>
</dbReference>
<dbReference type="Gene3D" id="1.10.510.10">
    <property type="entry name" value="Transferase(Phosphotransferase) domain 1"/>
    <property type="match status" value="1"/>
</dbReference>
<dbReference type="InterPro" id="IPR011009">
    <property type="entry name" value="Kinase-like_dom_sf"/>
</dbReference>
<dbReference type="InterPro" id="IPR001610">
    <property type="entry name" value="PAC"/>
</dbReference>
<dbReference type="InterPro" id="IPR000014">
    <property type="entry name" value="PAS"/>
</dbReference>
<dbReference type="InterPro" id="IPR000700">
    <property type="entry name" value="PAS-assoc_C"/>
</dbReference>
<dbReference type="InterPro" id="IPR035965">
    <property type="entry name" value="PAS-like_dom_sf"/>
</dbReference>
<dbReference type="InterPro" id="IPR000719">
    <property type="entry name" value="Prot_kinase_dom"/>
</dbReference>
<dbReference type="InterPro" id="IPR017441">
    <property type="entry name" value="Protein_kinase_ATP_BS"/>
</dbReference>
<dbReference type="InterPro" id="IPR008271">
    <property type="entry name" value="Ser/Thr_kinase_AS"/>
</dbReference>
<dbReference type="NCBIfam" id="TIGR00229">
    <property type="entry name" value="sensory_box"/>
    <property type="match status" value="2"/>
</dbReference>
<dbReference type="PANTHER" id="PTHR45637">
    <property type="entry name" value="FLIPPASE KINASE 1-RELATED"/>
    <property type="match status" value="1"/>
</dbReference>
<dbReference type="Pfam" id="PF13426">
    <property type="entry name" value="PAS_9"/>
    <property type="match status" value="2"/>
</dbReference>
<dbReference type="Pfam" id="PF00069">
    <property type="entry name" value="Pkinase"/>
    <property type="match status" value="1"/>
</dbReference>
<dbReference type="SMART" id="SM00086">
    <property type="entry name" value="PAC"/>
    <property type="match status" value="2"/>
</dbReference>
<dbReference type="SMART" id="SM00091">
    <property type="entry name" value="PAS"/>
    <property type="match status" value="2"/>
</dbReference>
<dbReference type="SMART" id="SM00220">
    <property type="entry name" value="S_TKc"/>
    <property type="match status" value="1"/>
</dbReference>
<dbReference type="SUPFAM" id="SSF56112">
    <property type="entry name" value="Protein kinase-like (PK-like)"/>
    <property type="match status" value="1"/>
</dbReference>
<dbReference type="SUPFAM" id="SSF55785">
    <property type="entry name" value="PYP-like sensor domain (PAS domain)"/>
    <property type="match status" value="2"/>
</dbReference>
<dbReference type="PROSITE" id="PS50113">
    <property type="entry name" value="PAC"/>
    <property type="match status" value="2"/>
</dbReference>
<dbReference type="PROSITE" id="PS50112">
    <property type="entry name" value="PAS"/>
    <property type="match status" value="2"/>
</dbReference>
<dbReference type="PROSITE" id="PS00107">
    <property type="entry name" value="PROTEIN_KINASE_ATP"/>
    <property type="match status" value="1"/>
</dbReference>
<dbReference type="PROSITE" id="PS50011">
    <property type="entry name" value="PROTEIN_KINASE_DOM"/>
    <property type="match status" value="1"/>
</dbReference>
<dbReference type="PROSITE" id="PS00108">
    <property type="entry name" value="PROTEIN_KINASE_ST"/>
    <property type="match status" value="1"/>
</dbReference>
<evidence type="ECO:0000250" key="1"/>
<evidence type="ECO:0000250" key="2">
    <source>
        <dbReference type="UniProtKB" id="O48963"/>
    </source>
</evidence>
<evidence type="ECO:0000250" key="3">
    <source>
        <dbReference type="UniProtKB" id="Q9XF67"/>
    </source>
</evidence>
<evidence type="ECO:0000255" key="4">
    <source>
        <dbReference type="PROSITE-ProRule" id="PRU00140"/>
    </source>
</evidence>
<evidence type="ECO:0000255" key="5">
    <source>
        <dbReference type="PROSITE-ProRule" id="PRU00141"/>
    </source>
</evidence>
<evidence type="ECO:0000255" key="6">
    <source>
        <dbReference type="PROSITE-ProRule" id="PRU00159"/>
    </source>
</evidence>
<evidence type="ECO:0000255" key="7">
    <source>
        <dbReference type="PROSITE-ProRule" id="PRU10027"/>
    </source>
</evidence>
<evidence type="ECO:0000256" key="8">
    <source>
        <dbReference type="SAM" id="MobiDB-lite"/>
    </source>
</evidence>
<evidence type="ECO:0000269" key="9">
    <source>
    </source>
</evidence>
<evidence type="ECO:0000269" key="10">
    <source>
    </source>
</evidence>
<evidence type="ECO:0000269" key="11">
    <source>
    </source>
</evidence>
<evidence type="ECO:0000269" key="12">
    <source>
    </source>
</evidence>
<evidence type="ECO:0000269" key="13">
    <source>
    </source>
</evidence>
<evidence type="ECO:0000269" key="14">
    <source>
    </source>
</evidence>
<evidence type="ECO:0000269" key="15">
    <source>
    </source>
</evidence>
<evidence type="ECO:0000269" key="16">
    <source>
    </source>
</evidence>
<evidence type="ECO:0000269" key="17">
    <source>
    </source>
</evidence>
<evidence type="ECO:0000269" key="18">
    <source>
    </source>
</evidence>
<evidence type="ECO:0000269" key="19">
    <source>
    </source>
</evidence>
<evidence type="ECO:0000269" key="20">
    <source>
    </source>
</evidence>
<evidence type="ECO:0000269" key="21">
    <source>
    </source>
</evidence>
<evidence type="ECO:0000269" key="22">
    <source>
    </source>
</evidence>
<evidence type="ECO:0000269" key="23">
    <source>
    </source>
</evidence>
<evidence type="ECO:0000269" key="24">
    <source>
    </source>
</evidence>
<evidence type="ECO:0000269" key="25">
    <source>
    </source>
</evidence>
<evidence type="ECO:0000269" key="26">
    <source>
    </source>
</evidence>
<evidence type="ECO:0000269" key="27">
    <source>
    </source>
</evidence>
<evidence type="ECO:0000269" key="28">
    <source>
    </source>
</evidence>
<evidence type="ECO:0000269" key="29">
    <source>
    </source>
</evidence>
<evidence type="ECO:0000303" key="30">
    <source>
    </source>
</evidence>
<evidence type="ECO:0000303" key="31">
    <source>
    </source>
</evidence>
<evidence type="ECO:0000303" key="32">
    <source>
    </source>
</evidence>
<evidence type="ECO:0000303" key="33">
    <source>
    </source>
</evidence>
<evidence type="ECO:0000303" key="34">
    <source>
    </source>
</evidence>
<evidence type="ECO:0000303" key="35">
    <source>
    </source>
</evidence>
<evidence type="ECO:0000303" key="36">
    <source ref="1"/>
</evidence>
<evidence type="ECO:0000305" key="37"/>
<evidence type="ECO:0000312" key="38">
    <source>
        <dbReference type="Araport" id="AT5G58140"/>
    </source>
</evidence>
<evidence type="ECO:0000312" key="39">
    <source>
        <dbReference type="EMBL" id="BAB09904.1"/>
    </source>
</evidence>
<evidence type="ECO:0007744" key="40">
    <source>
        <dbReference type="PDB" id="2Z6D"/>
    </source>
</evidence>
<evidence type="ECO:0007744" key="41">
    <source>
        <dbReference type="PDB" id="4EEP"/>
    </source>
</evidence>
<evidence type="ECO:0007744" key="42">
    <source>
        <dbReference type="PDB" id="4EER"/>
    </source>
</evidence>
<evidence type="ECO:0007744" key="43">
    <source>
        <dbReference type="PDB" id="4EES"/>
    </source>
</evidence>
<evidence type="ECO:0007744" key="44">
    <source>
        <dbReference type="PDB" id="4EET"/>
    </source>
</evidence>
<evidence type="ECO:0007744" key="45">
    <source>
        <dbReference type="PDB" id="4EEU"/>
    </source>
</evidence>
<evidence type="ECO:0007744" key="46">
    <source>
        <dbReference type="PDB" id="4NXB"/>
    </source>
</evidence>
<evidence type="ECO:0007744" key="47">
    <source>
        <dbReference type="PDB" id="4NXE"/>
    </source>
</evidence>
<evidence type="ECO:0007744" key="48">
    <source>
        <dbReference type="PDB" id="4NXF"/>
    </source>
</evidence>
<evidence type="ECO:0007744" key="49">
    <source>
        <dbReference type="PDB" id="4NXG"/>
    </source>
</evidence>
<evidence type="ECO:0007744" key="50">
    <source>
    </source>
</evidence>
<evidence type="ECO:0007829" key="51">
    <source>
        <dbReference type="PDB" id="2Z6D"/>
    </source>
</evidence>
<evidence type="ECO:0007829" key="52">
    <source>
        <dbReference type="PDB" id="6GPU"/>
    </source>
</evidence>
<evidence type="ECO:0007829" key="53">
    <source>
        <dbReference type="PDB" id="6QQH"/>
    </source>
</evidence>
<protein>
    <recommendedName>
        <fullName evidence="31 32">Phototropin-2</fullName>
        <ecNumber evidence="21 25">2.7.11.1</ecNumber>
    </recommendedName>
    <alternativeName>
        <fullName>Defective in chloroplast avoidance protein 1</fullName>
    </alternativeName>
    <alternativeName>
        <fullName evidence="30 36">Non-phototropic hypocotyl 1-like protein 1</fullName>
        <shortName>AtKin7</shortName>
        <shortName evidence="30 36">NPH1-like protein 1</shortName>
    </alternativeName>
</protein>
<keyword id="KW-0002">3D-structure</keyword>
<keyword id="KW-0025">Alternative splicing</keyword>
<keyword id="KW-0067">ATP-binding</keyword>
<keyword id="KW-1003">Cell membrane</keyword>
<keyword id="KW-0157">Chromophore</keyword>
<keyword id="KW-1015">Disulfide bond</keyword>
<keyword id="KW-0285">Flavoprotein</keyword>
<keyword id="KW-0288">FMN</keyword>
<keyword id="KW-0418">Kinase</keyword>
<keyword id="KW-0472">Membrane</keyword>
<keyword id="KW-0547">Nucleotide-binding</keyword>
<keyword id="KW-0597">Phosphoprotein</keyword>
<keyword id="KW-0600">Photoreceptor protein</keyword>
<keyword id="KW-0675">Receptor</keyword>
<keyword id="KW-1185">Reference proteome</keyword>
<keyword id="KW-0677">Repeat</keyword>
<keyword id="KW-0716">Sensory transduction</keyword>
<keyword id="KW-0723">Serine/threonine-protein kinase</keyword>
<keyword id="KW-0808">Transferase</keyword>
<name>PHOT2_ARATH</name>
<comment type="function">
    <text evidence="9 10 13 14 15 16 17 21 25 27 34 35">Protein kinase that acts as a blue light photoreceptor in a signal-transduction pathway for photo-induced movements (PubMed:14739272, PubMed:15821287, PubMed:31904040, PubMed:32855213). Triggers the phosphorylation of AHA1 and AHA2 C-terminal penultimate Thr in guard cells to activate them and induce stomatal opening in response to blue light (BL) (PubMed:15821287, PubMed:31904040). Also phosphorylates BLUS1, a kinase involved in stomatal opening (PubMed:23811955). Mediates calcium spiking of extra- and intracellular origins in response to blue light. Involved in hypocotyl phototropism. Contributes to the chloroplast accumulation in low blue light and mediates their translocation (avoidance response) at high fluence. Regulates stomata opening and photomorphogenesis response of leaf tissue. Not involved in hypocotyl elongation inhibition, anthocyanin accumulation or cotyledon opening.</text>
</comment>
<comment type="catalytic activity">
    <reaction evidence="21">
        <text>L-seryl-[protein] + ATP = O-phospho-L-seryl-[protein] + ADP + H(+)</text>
        <dbReference type="Rhea" id="RHEA:17989"/>
        <dbReference type="Rhea" id="RHEA-COMP:9863"/>
        <dbReference type="Rhea" id="RHEA-COMP:11604"/>
        <dbReference type="ChEBI" id="CHEBI:15378"/>
        <dbReference type="ChEBI" id="CHEBI:29999"/>
        <dbReference type="ChEBI" id="CHEBI:30616"/>
        <dbReference type="ChEBI" id="CHEBI:83421"/>
        <dbReference type="ChEBI" id="CHEBI:456216"/>
        <dbReference type="EC" id="2.7.11.1"/>
    </reaction>
</comment>
<comment type="catalytic activity">
    <reaction evidence="25">
        <text>L-threonyl-[protein] + ATP = O-phospho-L-threonyl-[protein] + ADP + H(+)</text>
        <dbReference type="Rhea" id="RHEA:46608"/>
        <dbReference type="Rhea" id="RHEA-COMP:11060"/>
        <dbReference type="Rhea" id="RHEA-COMP:11605"/>
        <dbReference type="ChEBI" id="CHEBI:15378"/>
        <dbReference type="ChEBI" id="CHEBI:30013"/>
        <dbReference type="ChEBI" id="CHEBI:30616"/>
        <dbReference type="ChEBI" id="CHEBI:61977"/>
        <dbReference type="ChEBI" id="CHEBI:456216"/>
        <dbReference type="EC" id="2.7.11.1"/>
    </reaction>
</comment>
<comment type="cofactor">
    <cofactor evidence="18 20 22">
        <name>FMN</name>
        <dbReference type="ChEBI" id="CHEBI:58210"/>
    </cofactor>
    <text evidence="18 20 22">Binds 2 FMN per subunit.</text>
</comment>
<comment type="activity regulation">
    <text evidence="23">Autophosphorylation is inhibited by staurosporine, but not by tyrphostin 9, sphingosine, GW5074 and BML-265.</text>
</comment>
<comment type="biophysicochemical properties">
    <absorption>
        <max evidence="11 24 28 29">447 nm</max>
        <text evidence="11 24 26 28 29">Results obtained in dark state (PubMed:31316810, PubMed:33862085). Exhibits a smaller absorbance peak at 350 nm (PubMed:12068117, PubMed:31316810, PubMed:33862085, PubMed:36381146). The broad fluorescence emission spectrum peaks at 496 nm (PubMed:12068117, PubMed:31316810, PubMed:33862085). After blue-light-induced photoadduct, the maximum absorbption peak is observed at 390 nm (PubMed:31316810, PubMed:32695419, PubMed:36381146).</text>
    </absorption>
</comment>
<comment type="subunit">
    <text evidence="18 19 23 25">Homodimer. Interacts with PKS1, PKS2, RPT3 and PHOT1. Associates with CBC1 and CBC2 (PubMed:31904040). Binds to BHP (PubMed:28358053).</text>
</comment>
<comment type="interaction">
    <interactant intactId="EBI-2270423">
        <id>P93025</id>
    </interactant>
    <interactant intactId="EBI-301649">
        <id>P43254</id>
        <label>COP1</label>
    </interactant>
    <organismsDiffer>false</organismsDiffer>
    <experiments>2</experiments>
</comment>
<comment type="interaction">
    <interactant intactId="EBI-2270423">
        <id>P93025</id>
    </interactant>
    <interactant intactId="EBI-2270423">
        <id>P93025</id>
        <label>PHOT2</label>
    </interactant>
    <organismsDiffer>false</organismsDiffer>
    <experiments>2</experiments>
</comment>
<comment type="subcellular location">
    <subcellularLocation>
        <location evidence="13">Cell membrane</location>
        <topology evidence="13">Peripheral membrane protein</topology>
    </subcellularLocation>
</comment>
<comment type="alternative products">
    <event type="alternative splicing"/>
    <isoform>
        <id>P93025-1</id>
        <name>1</name>
        <sequence type="displayed"/>
    </isoform>
    <isoform>
        <id>P93025-2</id>
        <name>2</name>
        <sequence type="described" ref="VSP_016306 VSP_016307"/>
    </isoform>
</comment>
<comment type="tissue specificity">
    <text evidence="9 17">Expressed in leaves, stems and flowers, and to a lower extent in roots (PubMed:11251116). Present in guard cells (at protein level) (PubMed:15821287).</text>
</comment>
<comment type="induction">
    <text evidence="9">Light fluence rate-dependent induction, independent of light quality.</text>
</comment>
<comment type="domain">
    <text evidence="1 2 3">The activation loop within the kinase domain is the target of phosphorylation (By similarity). The PAS (PER-ARNT-SIM) domains are required for the binding of FMN chromophores (By similarity).</text>
</comment>
<comment type="PTM">
    <text evidence="10 23">Autophosphorylated in response to blue light irradiation.</text>
</comment>
<comment type="PTM">
    <text evidence="10">2 molecules of FMN bind covalently to cysteines after exposure to blue light and are reversed in the dark.</text>
</comment>
<comment type="disruption phenotype">
    <text evidence="14 17 25 27">Plants lacking both PHOT1 and PHOT2 have curled downward leaves missing color changes and lower petiole angles in response to weak or strong blue light (BL) (PubMed:14739272, PubMed:31904040, PubMed:32855213). Impaired proton H(+) pumping associated with altered increased ATP hydrolysis and absence of binding between 14-3-3 protein and H(+)-ATPase (e.g. AHA1 and AHA2) in response to BL in guard cells of plants missing PHOT1 and PHOT2 (PubMed:15821287).</text>
</comment>
<comment type="biotechnology">
    <text evidence="20 22 28">The flavoproteins improved LOV (iLOVs) are fluorescent flavoproteins engineered from PHOT2 by improving its photostability and brighteness, and which maybe used as oxygen-independent fluorescent reporters with a small size (PubMed:22573334). The iLOVs are PHOT2 fragments (385-496) and contain many amino-acid substitutions relative to cv. Columbia, to confer different properties in term of stablity, brightness and color (PubMed:22573334). A family of acid and Mn(III) turn-on fluorescent protein (FP) sensors, called iLovU, has been developed based on photo-induced electron transfer (PET) and the genetic incorporation of superior PET quenchers in a fluorescent flavoprotein iLov; iLovU sensors should be applicable for studying pH changes in living cells (PubMed:25197956). Blue- and red-shifted variants are promising tools for two-color microscopy based on spectral separation (PubMed:33862085).</text>
</comment>
<comment type="miscellaneous">
    <text>Undergoes a photocycle characterized by fluorescence and absorption changes induced by blue light. Half-time of photoproduct formation is 11 seconds and 15 seconds for dark regeneration.</text>
</comment>
<comment type="miscellaneous">
    <molecule>Isoform 2</molecule>
    <text evidence="37">May be due to a competing acceptor splice site.</text>
</comment>
<comment type="similarity">
    <text evidence="37">Belongs to the protein kinase superfamily. AGC Ser/Thr protein kinase family.</text>
</comment>
<feature type="chain" id="PRO_0000086523" description="Phototropin-2">
    <location>
        <begin position="1"/>
        <end position="915"/>
    </location>
</feature>
<feature type="domain" description="PAS 1" evidence="4">
    <location>
        <begin position="120"/>
        <end position="193"/>
    </location>
</feature>
<feature type="domain" description="PAC 1" evidence="5">
    <location>
        <begin position="194"/>
        <end position="248"/>
    </location>
</feature>
<feature type="domain" description="PAS 2" evidence="4">
    <location>
        <begin position="376"/>
        <end position="449"/>
    </location>
</feature>
<feature type="domain" description="PAC 2" evidence="5">
    <location>
        <begin position="450"/>
        <end position="504"/>
    </location>
</feature>
<feature type="domain" description="Protein kinase" evidence="6">
    <location>
        <begin position="577"/>
        <end position="864"/>
    </location>
</feature>
<feature type="region of interest" description="Disordered" evidence="8">
    <location>
        <begin position="1"/>
        <end position="62"/>
    </location>
</feature>
<feature type="region of interest" description="Disordered" evidence="8">
    <location>
        <begin position="84"/>
        <end position="118"/>
    </location>
</feature>
<feature type="region of interest" description="Disordered" evidence="8">
    <location>
        <begin position="281"/>
        <end position="344"/>
    </location>
</feature>
<feature type="region of interest" description="Activation loop" evidence="1">
    <location>
        <begin position="720"/>
        <end position="774"/>
    </location>
</feature>
<feature type="compositionally biased region" description="Pro residues" evidence="8">
    <location>
        <begin position="1"/>
        <end position="10"/>
    </location>
</feature>
<feature type="compositionally biased region" description="Polar residues" evidence="8">
    <location>
        <begin position="27"/>
        <end position="43"/>
    </location>
</feature>
<feature type="compositionally biased region" description="Basic and acidic residues" evidence="8">
    <location>
        <begin position="93"/>
        <end position="107"/>
    </location>
</feature>
<feature type="compositionally biased region" description="Polar residues" evidence="8">
    <location>
        <begin position="286"/>
        <end position="310"/>
    </location>
</feature>
<feature type="compositionally biased region" description="Polar residues" evidence="8">
    <location>
        <begin position="325"/>
        <end position="337"/>
    </location>
</feature>
<feature type="active site" description="Proton acceptor" evidence="6 7">
    <location>
        <position position="702"/>
    </location>
</feature>
<feature type="binding site" evidence="18 40">
    <location>
        <position position="169"/>
    </location>
    <ligand>
        <name>FMN</name>
        <dbReference type="ChEBI" id="CHEBI:58210"/>
        <label>1</label>
    </ligand>
</feature>
<feature type="binding site" evidence="18 40">
    <location>
        <position position="171"/>
    </location>
    <ligand>
        <name>FMN</name>
        <dbReference type="ChEBI" id="CHEBI:58210"/>
        <label>1</label>
    </ligand>
</feature>
<feature type="binding site" evidence="18 40">
    <location>
        <position position="174"/>
    </location>
    <ligand>
        <name>FMN</name>
        <dbReference type="ChEBI" id="CHEBI:58210"/>
        <label>1</label>
    </ligand>
</feature>
<feature type="binding site" evidence="18 40">
    <location>
        <position position="187"/>
    </location>
    <ligand>
        <name>FMN</name>
        <dbReference type="ChEBI" id="CHEBI:58210"/>
        <label>1</label>
    </ligand>
</feature>
<feature type="binding site" evidence="18 40">
    <location>
        <position position="202"/>
    </location>
    <ligand>
        <name>FMN</name>
        <dbReference type="ChEBI" id="CHEBI:58210"/>
        <label>1</label>
    </ligand>
</feature>
<feature type="binding site" evidence="18 40">
    <location>
        <position position="212"/>
    </location>
    <ligand>
        <name>FMN</name>
        <dbReference type="ChEBI" id="CHEBI:58210"/>
        <label>1</label>
    </ligand>
</feature>
<feature type="binding site" evidence="18 40">
    <location>
        <position position="233"/>
    </location>
    <ligand>
        <name>FMN</name>
        <dbReference type="ChEBI" id="CHEBI:58210"/>
        <label>1</label>
    </ligand>
</feature>
<feature type="binding site" evidence="18 40">
    <location>
        <position position="238"/>
    </location>
    <ligand>
        <name>FMN</name>
        <dbReference type="ChEBI" id="CHEBI:58210"/>
        <label>1</label>
    </ligand>
</feature>
<feature type="binding site" evidence="20 22 41 42 43 44 45 46 47 48 49">
    <location>
        <position position="425"/>
    </location>
    <ligand>
        <name>FMN</name>
        <dbReference type="ChEBI" id="CHEBI:58210"/>
        <label>2</label>
    </ligand>
</feature>
<feature type="binding site" evidence="20 22 41 42 43 44 45 46 47 48 49">
    <location>
        <position position="427"/>
    </location>
    <ligand>
        <name>FMN</name>
        <dbReference type="ChEBI" id="CHEBI:58210"/>
        <label>2</label>
    </ligand>
</feature>
<feature type="binding site" evidence="20 22 41 42 43 44 45 46 47 48 49">
    <location>
        <position position="430"/>
    </location>
    <ligand>
        <name>FMN</name>
        <dbReference type="ChEBI" id="CHEBI:58210"/>
        <label>2</label>
    </ligand>
</feature>
<feature type="binding site" evidence="20 22 41 42 43 44 45 46 47 48 49">
    <location>
        <position position="443"/>
    </location>
    <ligand>
        <name>FMN</name>
        <dbReference type="ChEBI" id="CHEBI:58210"/>
        <label>2</label>
    </ligand>
</feature>
<feature type="binding site" evidence="20 22 41 42 43 44 45 46 47 48 49">
    <location>
        <position position="458"/>
    </location>
    <ligand>
        <name>FMN</name>
        <dbReference type="ChEBI" id="CHEBI:58210"/>
        <label>2</label>
    </ligand>
</feature>
<feature type="binding site" evidence="20 22 41 42 43 44 45 46 47 48 49">
    <location>
        <position position="468"/>
    </location>
    <ligand>
        <name>FMN</name>
        <dbReference type="ChEBI" id="CHEBI:58210"/>
        <label>2</label>
    </ligand>
</feature>
<feature type="binding site" evidence="20 41 42">
    <location>
        <position position="470"/>
    </location>
    <ligand>
        <name>FMN</name>
        <dbReference type="ChEBI" id="CHEBI:58210"/>
        <label>2</label>
    </ligand>
</feature>
<feature type="binding site" evidence="20 22 41 42 43 44 45 47 48 49">
    <location>
        <position position="489"/>
    </location>
    <ligand>
        <name>FMN</name>
        <dbReference type="ChEBI" id="CHEBI:58210"/>
        <label>2</label>
    </ligand>
</feature>
<feature type="binding site" evidence="6">
    <location>
        <begin position="583"/>
        <end position="591"/>
    </location>
    <ligand>
        <name>ATP</name>
        <dbReference type="ChEBI" id="CHEBI:30616"/>
    </ligand>
</feature>
<feature type="binding site" evidence="6">
    <location>
        <position position="606"/>
    </location>
    <ligand>
        <name>ATP</name>
        <dbReference type="ChEBI" id="CHEBI:30616"/>
    </ligand>
</feature>
<feature type="modified residue" description="Phosphoserine" evidence="50">
    <location>
        <position position="9"/>
    </location>
</feature>
<feature type="modified residue" description="Phosphoserine" evidence="50">
    <location>
        <position position="22"/>
    </location>
</feature>
<feature type="modified residue" description="Phosphoserine" evidence="2">
    <location>
        <position position="121"/>
    </location>
</feature>
<feature type="modified residue" description="S-4a-FMN cysteine" evidence="1">
    <location>
        <position position="170"/>
    </location>
</feature>
<feature type="modified residue" description="Phosphoserine" evidence="50">
    <location>
        <position position="364"/>
    </location>
</feature>
<feature type="modified residue" description="S-4a-FMN cysteine" evidence="1">
    <location>
        <position position="426"/>
    </location>
</feature>
<feature type="disulfide bond" description="Interchain" evidence="2">
    <location>
        <position position="197"/>
    </location>
</feature>
<feature type="splice variant" id="VSP_016306" description="In isoform 2." evidence="33">
    <original>RPEDLWAAHSKPVYP</original>
    <variation>VRCTSSLLLNKDGKV</variation>
    <location>
        <begin position="535"/>
        <end position="549"/>
    </location>
</feature>
<feature type="splice variant" id="VSP_016307" description="In isoform 2." evidence="33">
    <location>
        <begin position="550"/>
        <end position="915"/>
    </location>
</feature>
<feature type="mutagenesis site" description="No effect on light-dependent autophosphorylation." evidence="12">
    <original>C</original>
    <variation>A</variation>
    <location>
        <position position="170"/>
    </location>
</feature>
<feature type="mutagenesis site" description="Loss of dimerization." evidence="18">
    <original>T</original>
    <variation>Q</variation>
    <location>
        <position position="217"/>
    </location>
</feature>
<feature type="mutagenesis site" description="Loss of dimerization." evidence="18">
    <original>M</original>
    <variation>V</variation>
    <location>
        <position position="232"/>
    </location>
</feature>
<feature type="mutagenesis site" description="Red-shifted emitted light fluorescence (502 nm) but normal absorption (maximum at 447 nm); when associated with K-489." evidence="28">
    <original>V</original>
    <variation>T</variation>
    <location>
        <position position="392"/>
    </location>
</feature>
<feature type="mutagenesis site" description="Severe loss of light-sensing and light-dependent autophosphorylation." evidence="12 20">
    <original>C</original>
    <variation>A</variation>
    <location>
        <position position="426"/>
    </location>
</feature>
<feature type="mutagenesis site" description="Blue-shifted light absorption (maximum at 441 nm) and emitted fluorescence (487 nm). Red-shifted light emitted fluorescence (502 nm) but normal absorption (maximum at 447 nm); when associated with T-392." evidence="28">
    <original>Q</original>
    <variation>K</variation>
    <location>
        <position position="489"/>
    </location>
</feature>
<feature type="mutagenesis site" description="In cav1-2; loss of chloroplast avoidance response in response to high fluence blue light." evidence="9">
    <original>T</original>
    <variation>I</variation>
    <location>
        <position position="727"/>
    </location>
</feature>
<feature type="sequence conflict" description="In Ref. 5; AAB39188." evidence="37" ref="5">
    <original>D</original>
    <variation>Y</variation>
    <location>
        <position position="722"/>
    </location>
</feature>
<feature type="helix" evidence="51">
    <location>
        <begin position="124"/>
        <end position="130"/>
    </location>
</feature>
<feature type="strand" evidence="51">
    <location>
        <begin position="134"/>
        <end position="139"/>
    </location>
</feature>
<feature type="strand" evidence="51">
    <location>
        <begin position="147"/>
        <end position="150"/>
    </location>
</feature>
<feature type="helix" evidence="51">
    <location>
        <begin position="152"/>
        <end position="158"/>
    </location>
</feature>
<feature type="helix" evidence="51">
    <location>
        <begin position="162"/>
        <end position="165"/>
    </location>
</feature>
<feature type="helix" evidence="51">
    <location>
        <begin position="170"/>
        <end position="173"/>
    </location>
</feature>
<feature type="helix" evidence="51">
    <location>
        <begin position="180"/>
        <end position="191"/>
    </location>
</feature>
<feature type="strand" evidence="51">
    <location>
        <begin position="196"/>
        <end position="203"/>
    </location>
</feature>
<feature type="strand" evidence="51">
    <location>
        <begin position="209"/>
        <end position="220"/>
    </location>
</feature>
<feature type="strand" evidence="51">
    <location>
        <begin position="226"/>
        <end position="235"/>
    </location>
</feature>
<feature type="strand" evidence="52">
    <location>
        <begin position="390"/>
        <end position="394"/>
    </location>
</feature>
<feature type="strand" evidence="52">
    <location>
        <begin position="403"/>
        <end position="406"/>
    </location>
</feature>
<feature type="helix" evidence="52">
    <location>
        <begin position="408"/>
        <end position="414"/>
    </location>
</feature>
<feature type="helix" evidence="52">
    <location>
        <begin position="418"/>
        <end position="420"/>
    </location>
</feature>
<feature type="turn" evidence="52">
    <location>
        <begin position="421"/>
        <end position="423"/>
    </location>
</feature>
<feature type="helix" evidence="52">
    <location>
        <begin position="426"/>
        <end position="429"/>
    </location>
</feature>
<feature type="helix" evidence="52">
    <location>
        <begin position="436"/>
        <end position="448"/>
    </location>
</feature>
<feature type="strand" evidence="52">
    <location>
        <begin position="452"/>
        <end position="459"/>
    </location>
</feature>
<feature type="strand" evidence="52">
    <location>
        <begin position="465"/>
        <end position="476"/>
    </location>
</feature>
<feature type="strand" evidence="52">
    <location>
        <begin position="482"/>
        <end position="492"/>
    </location>
</feature>
<feature type="helix" evidence="53">
    <location>
        <begin position="497"/>
        <end position="500"/>
    </location>
</feature>
<gene>
    <name evidence="31 32" type="primary">PHOT2</name>
    <name type="synonym">CAV1</name>
    <name type="synonym">KIN7</name>
    <name evidence="30 36" type="synonym">NPL1</name>
    <name evidence="38" type="ordered locus">At5g58140</name>
    <name evidence="39" type="ORF">K21L19.6</name>
</gene>
<sequence>MERPRAPPSPLNDAESLSERRSLEIFNPSSGKETHGSTSSSSKPPLDGNNKGSSSKWMEFQDSAKITERTAEWGLSAVKPDSGDDGISFKLSSEVERSKNMSRRSSEESTSSESGAFPRVSQELKTALSTLQQTFVVSDATQPHCPIVYASSGFFTMTGYSSKEIVGRNCRFLQGPDTDKNEVAKIRDCVKNGKSYCGRLLNYKKDGTPFWNLLTVTPIKDDQGNTIKFIGMQVEVSKYTEGVNDKALRPNGLSKSLIRYDARQKEKALDSITEVVQTIRHRKSQVQESVSNDTMVKPDSSTTPTPGRQTRQSDEASKSFRTPGRVSTPTGSKLKSSNNRHEDLLRMEPEELMLSTEVIGQRDSWDLSDRERDIRQGIDLATTLERIEKNFVISDPRLPDNPIIFASDSFLELTEYSREEILGRNCRFLQGPETDQATVQKIRDAIRDQREITVQLINYTKSGKKFWNLFHLQPMRDQKGELQYFIGVQLDGSDHVEPLQNRLSERTEMQSSKLVKATATNVDEAVRELPDANTRPEDLWAAHSKPVYPLPHNKESTSWKAIKKIQASGETVGLHHFKPIKPLGSGDTGSVHLVELKGTGELYAMKAMEKTMMLNRNKAHRACIEREIISLLDHPFLPTLYASFQTSTHVCLITDFCPGGELFALLDRQPMKILTEDSARFYAAEVVIGLEYLHCLGIVYRDLKPENILLKKDGHIVLADFDLSFMTTCTPQLIIPAAPSKRRRSKSQPLPTFVAEPSTQSNSFVGTEEYIAPEIITGAGHTSAIDWWALGILLYEMLYGRTPFRGKNRQKTFANILHKDLTFPSSIPVSLVGRQLINTLLNRDPSSRLGSKGGANEIKQHAFFRGINWPLIRGMSPPPLDAPLSIIEKDPNAKDIKWEDDGVLVNSTDLDIDLF</sequence>
<organism>
    <name type="scientific">Arabidopsis thaliana</name>
    <name type="common">Mouse-ear cress</name>
    <dbReference type="NCBI Taxonomy" id="3702"/>
    <lineage>
        <taxon>Eukaryota</taxon>
        <taxon>Viridiplantae</taxon>
        <taxon>Streptophyta</taxon>
        <taxon>Embryophyta</taxon>
        <taxon>Tracheophyta</taxon>
        <taxon>Spermatophyta</taxon>
        <taxon>Magnoliopsida</taxon>
        <taxon>eudicotyledons</taxon>
        <taxon>Gunneridae</taxon>
        <taxon>Pentapetalae</taxon>
        <taxon>rosids</taxon>
        <taxon>malvids</taxon>
        <taxon>Brassicales</taxon>
        <taxon>Brassicaceae</taxon>
        <taxon>Camelineae</taxon>
        <taxon>Arabidopsis</taxon>
    </lineage>
</organism>
<proteinExistence type="evidence at protein level"/>
<reference key="1">
    <citation type="online journal article" date="1998" name="Plant Gene Register">
        <title>NPH2: a second member of the NPH serine/threonine kinase family of Arabidopsis.</title>
        <authorList>
            <person name="Jarillo J.A."/>
            <person name="Ahmad M."/>
            <person name="Cashmore A.R."/>
        </authorList>
        <locator>PGR98-100</locator>
    </citation>
    <scope>NUCLEOTIDE SEQUENCE [MRNA] (ISOFORM 1)</scope>
</reference>
<reference key="2">
    <citation type="journal article" date="2000" name="DNA Res.">
        <title>Structural analysis of Arabidopsis thaliana chromosome 5. X. Sequence features of the regions of 3,076,755 bp covered by sixty P1 and TAC clones.</title>
        <authorList>
            <person name="Sato S."/>
            <person name="Nakamura Y."/>
            <person name="Kaneko T."/>
            <person name="Katoh T."/>
            <person name="Asamizu E."/>
            <person name="Kotani H."/>
            <person name="Tabata S."/>
        </authorList>
    </citation>
    <scope>NUCLEOTIDE SEQUENCE [LARGE SCALE GENOMIC DNA]</scope>
    <source>
        <strain>cv. Columbia</strain>
    </source>
</reference>
<reference key="3">
    <citation type="journal article" date="2017" name="Plant J.">
        <title>Araport11: a complete reannotation of the Arabidopsis thaliana reference genome.</title>
        <authorList>
            <person name="Cheng C.Y."/>
            <person name="Krishnakumar V."/>
            <person name="Chan A.P."/>
            <person name="Thibaud-Nissen F."/>
            <person name="Schobel S."/>
            <person name="Town C.D."/>
        </authorList>
    </citation>
    <scope>GENOME REANNOTATION</scope>
    <source>
        <strain>cv. Columbia</strain>
    </source>
</reference>
<reference key="4">
    <citation type="journal article" date="2003" name="Science">
        <title>Empirical analysis of transcriptional activity in the Arabidopsis genome.</title>
        <authorList>
            <person name="Yamada K."/>
            <person name="Lim J."/>
            <person name="Dale J.M."/>
            <person name="Chen H."/>
            <person name="Shinn P."/>
            <person name="Palm C.J."/>
            <person name="Southwick A.M."/>
            <person name="Wu H.C."/>
            <person name="Kim C.J."/>
            <person name="Nguyen M."/>
            <person name="Pham P.K."/>
            <person name="Cheuk R.F."/>
            <person name="Karlin-Newmann G."/>
            <person name="Liu S.X."/>
            <person name="Lam B."/>
            <person name="Sakano H."/>
            <person name="Wu T."/>
            <person name="Yu G."/>
            <person name="Miranda M."/>
            <person name="Quach H.L."/>
            <person name="Tripp M."/>
            <person name="Chang C.H."/>
            <person name="Lee J.M."/>
            <person name="Toriumi M.J."/>
            <person name="Chan M.M."/>
            <person name="Tang C.C."/>
            <person name="Onodera C.S."/>
            <person name="Deng J.M."/>
            <person name="Akiyama K."/>
            <person name="Ansari Y."/>
            <person name="Arakawa T."/>
            <person name="Banh J."/>
            <person name="Banno F."/>
            <person name="Bowser L."/>
            <person name="Brooks S.Y."/>
            <person name="Carninci P."/>
            <person name="Chao Q."/>
            <person name="Choy N."/>
            <person name="Enju A."/>
            <person name="Goldsmith A.D."/>
            <person name="Gurjal M."/>
            <person name="Hansen N.F."/>
            <person name="Hayashizaki Y."/>
            <person name="Johnson-Hopson C."/>
            <person name="Hsuan V.W."/>
            <person name="Iida K."/>
            <person name="Karnes M."/>
            <person name="Khan S."/>
            <person name="Koesema E."/>
            <person name="Ishida J."/>
            <person name="Jiang P.X."/>
            <person name="Jones T."/>
            <person name="Kawai J."/>
            <person name="Kamiya A."/>
            <person name="Meyers C."/>
            <person name="Nakajima M."/>
            <person name="Narusaka M."/>
            <person name="Seki M."/>
            <person name="Sakurai T."/>
            <person name="Satou M."/>
            <person name="Tamse R."/>
            <person name="Vaysberg M."/>
            <person name="Wallender E.K."/>
            <person name="Wong C."/>
            <person name="Yamamura Y."/>
            <person name="Yuan S."/>
            <person name="Shinozaki K."/>
            <person name="Davis R.W."/>
            <person name="Theologis A."/>
            <person name="Ecker J.R."/>
        </authorList>
    </citation>
    <scope>NUCLEOTIDE SEQUENCE [LARGE SCALE MRNA] (ISOFORM 2)</scope>
    <source>
        <strain>cv. Columbia</strain>
    </source>
</reference>
<reference key="5">
    <citation type="submission" date="1996-11" db="EMBL/GenBank/DDBJ databases">
        <title>Arabidopsis thaliana putative serine/threonine protein kinase.</title>
        <authorList>
            <person name="Winge P."/>
            <person name="Thangstad O.P."/>
        </authorList>
    </citation>
    <scope>NUCLEOTIDE SEQUENCE [MRNA] OF 560-915 (ISOFORM 1)</scope>
</reference>
<reference key="6">
    <citation type="journal article" date="2001" name="Proc. Natl. Acad. Sci. U.S.A.">
        <title>Arabidopsis nph1 and npl1: blue light receptors that mediate both phototropism and chloroplast relocation.</title>
        <authorList>
            <person name="Sakai T."/>
            <person name="Kagawa T."/>
            <person name="Kasahara M."/>
            <person name="Swartz T.E."/>
            <person name="Christie J.M."/>
            <person name="Briggs W.R."/>
            <person name="Wada M."/>
            <person name="Okada K."/>
        </authorList>
    </citation>
    <scope>FUNCTION</scope>
    <scope>FMN-BINDING</scope>
    <scope>PHOSPHORYLATION</scope>
</reference>
<reference key="7">
    <citation type="journal article" date="2001" name="Science">
        <title>Arabidopsis NPL1: a phototropin homolog controlling the chloroplast high-light avoidance response.</title>
        <authorList>
            <person name="Kagawa T."/>
            <person name="Sakai T."/>
            <person name="Suetsugu N."/>
            <person name="Oikawa K."/>
            <person name="Ishiguro S."/>
            <person name="Kato T."/>
            <person name="Tabata S."/>
            <person name="Okada K."/>
            <person name="Wada M."/>
        </authorList>
    </citation>
    <scope>FUNCTION</scope>
    <scope>TISSUE SPECIFICITY</scope>
    <scope>INDUCTION</scope>
    <scope>MUTAGENESIS OF THR-727</scope>
</reference>
<reference key="8">
    <citation type="journal article" date="2002" name="Plant J.">
        <title>Phototropin LOV domains exhibit distinct roles in regulating photoreceptor function.</title>
        <authorList>
            <person name="Christie J.M."/>
            <person name="Swartz T.E."/>
            <person name="Bogomolni R.A."/>
            <person name="Briggs W.R."/>
        </authorList>
    </citation>
    <scope>AUTOPHOSPHORYLATION</scope>
    <scope>MUTAGENESIS OF CYS-170 AND CYS-426</scope>
</reference>
<reference key="9">
    <citation type="journal article" date="2002" name="Plant Physiol.">
        <title>Photochemical properties of the flavin mononucleotide-binding domains of the phototropins from Arabidopsis, rice, and Chlamydomonas reinhardtii.</title>
        <authorList>
            <person name="Kasahara M."/>
            <person name="Swartz T.E."/>
            <person name="Olney M.A."/>
            <person name="Onodera A."/>
            <person name="Mochizuki N."/>
            <person name="Fukuzawa H."/>
            <person name="Asamizu E."/>
            <person name="Tabata S."/>
            <person name="Kanegae H."/>
            <person name="Takano M."/>
            <person name="Christie J.M."/>
            <person name="Nagatani A."/>
            <person name="Briggs W.R."/>
        </authorList>
    </citation>
    <scope>BIOPHYSICOCHEMICAL PROPERTIES</scope>
</reference>
<reference key="10">
    <citation type="journal article" date="2003" name="Proc. Natl. Acad. Sci. U.S.A.">
        <title>Phot1 and phot2 mediate blue light-induced transient increases in cytosolic Ca2+ differently in Arabidopsis leaves.</title>
        <authorList>
            <person name="Harada A."/>
            <person name="Sakai T."/>
            <person name="Okada K."/>
        </authorList>
    </citation>
    <scope>FUNCTION</scope>
    <scope>SUBCELLULAR LOCATION</scope>
</reference>
<reference key="11">
    <citation type="journal article" date="2003" name="Trends Plant Sci.">
        <title>Growth signalling pathways in Arabidopsis and the AGC protein kinases.</title>
        <authorList>
            <person name="Boegre L."/>
            <person name="Okresz L."/>
            <person name="Henriques R."/>
            <person name="Anthony R.G."/>
        </authorList>
    </citation>
    <scope>GENE FAMILY</scope>
    <scope>REVIEW</scope>
</reference>
<reference key="12">
    <citation type="journal article" date="2004" name="J. Exp. Bot.">
        <title>A transgene encoding a blue-light receptor, phot1, restores blue-light responses in the Arabidopsis phot1 phot2 double mutant.</title>
        <authorList>
            <person name="Doi M."/>
            <person name="Shigenaga A."/>
            <person name="Emi T."/>
            <person name="Kinoshita T."/>
            <person name="Shimazaki K."/>
        </authorList>
    </citation>
    <scope>FUNCTION</scope>
    <scope>DISRUPTION PHENOTYPE</scope>
    <source>
        <strain>cv. Columbia GL1</strain>
    </source>
</reference>
<reference key="13">
    <citation type="journal article" date="2004" name="Plant Cell">
        <title>RPT2 is a signal transducer involved in phototropic response and stomatal opening by association with phototropin 1 in Arabidopsis thaliana.</title>
        <authorList>
            <person name="Inada S."/>
            <person name="Ohgishi M."/>
            <person name="Mayama T."/>
            <person name="Okada K."/>
            <person name="Sakai T."/>
        </authorList>
    </citation>
    <scope>FUNCTION</scope>
</reference>
<reference key="14">
    <citation type="journal article" date="2004" name="Proc. Natl. Acad. Sci. U.S.A.">
        <title>Functional analysis of each blue light receptor, cry1, cry2, phot1, and phot2, by using combinatorial multiple mutants in Arabidopsis.</title>
        <authorList>
            <person name="Ohgishi M."/>
            <person name="Saji K."/>
            <person name="Okada K."/>
            <person name="Sakai T."/>
        </authorList>
    </citation>
    <scope>FUNCTION</scope>
</reference>
<reference key="15">
    <citation type="journal article" date="2005" name="Plant Cell Physiol.">
        <title>Biochemical characterization of plasma membrane H+-ATPase activation in guard cell protoplasts of Arabidopsis thaliana in response to blue light.</title>
        <authorList>
            <person name="Ueno K."/>
            <person name="Kinoshita T."/>
            <person name="Inoue S."/>
            <person name="Emi T."/>
            <person name="Shimazaki K."/>
        </authorList>
    </citation>
    <scope>FUNCTION</scope>
    <scope>DISRUPTION PHENOTYPE</scope>
    <scope>TISSUE SPECIFICITY</scope>
    <source>
        <strain>cv. Columbia GL1</strain>
    </source>
</reference>
<reference key="16">
    <citation type="journal article" date="2009" name="Plant Physiol.">
        <title>Large-scale Arabidopsis phosphoproteome profiling reveals novel chloroplast kinase substrates and phosphorylation networks.</title>
        <authorList>
            <person name="Reiland S."/>
            <person name="Messerli G."/>
            <person name="Baerenfaller K."/>
            <person name="Gerrits B."/>
            <person name="Endler A."/>
            <person name="Grossmann J."/>
            <person name="Gruissem W."/>
            <person name="Baginsky S."/>
        </authorList>
    </citation>
    <scope>PHOSPHORYLATION [LARGE SCALE ANALYSIS] AT SER-9; SER-22 AND SER-364</scope>
    <scope>IDENTIFICATION BY MASS SPECTROMETRY [LARGE SCALE ANALYSIS]</scope>
</reference>
<reference key="17">
    <citation type="journal article" date="2010" name="Plant Physiol.">
        <title>The Arabidopsis PHYTOCHROME KINASE SUBSTRATE2 protein is a phototropin signaling element that regulates leaf flattening and leaf positioning.</title>
        <authorList>
            <person name="de Carbonnel M."/>
            <person name="Davis P."/>
            <person name="Roelfsema M.R."/>
            <person name="Inoue S."/>
            <person name="Schepens I."/>
            <person name="Lariguet P."/>
            <person name="Geisler M."/>
            <person name="Shimazaki K."/>
            <person name="Hangarter R."/>
            <person name="Fankhauser C."/>
        </authorList>
    </citation>
    <scope>INTERACTION WITH PKS1; PKS2; RPT3 AND PHOT1</scope>
</reference>
<reference key="18">
    <citation type="journal article" date="2013" name="Nat. Commun.">
        <title>Phosphorylation of BLUS1 kinase by phototropins is a primary step in stomatal opening.</title>
        <authorList>
            <person name="Takemiya A."/>
            <person name="Sugiyama N."/>
            <person name="Fujimoto H."/>
            <person name="Tsutsumi T."/>
            <person name="Yamauchi S."/>
            <person name="Hiyama A."/>
            <person name="Tada Y."/>
            <person name="Christie J.M."/>
            <person name="Shimazaki K."/>
        </authorList>
    </citation>
    <scope>FUNCTION</scope>
    <scope>CATALYTIC ACTIVITY</scope>
</reference>
<reference key="19">
    <citation type="journal article" date="2017" name="Sci. Rep.">
        <title>A Raf-like protein kinase BHP mediates blue light-dependent stomatal opening.</title>
        <authorList>
            <person name="Hayashi M."/>
            <person name="Inoue S.-I."/>
            <person name="Ueno Y."/>
            <person name="Kinoshita T."/>
        </authorList>
    </citation>
    <scope>PHOSPHORYLATION</scope>
    <scope>ACTIVITY REGULATION</scope>
    <scope>INTERACTION WITH BHP</scope>
    <source>
        <strain>cv. Columbia</strain>
    </source>
</reference>
<reference key="20">
    <citation type="journal article" date="2020" name="Photochem. Photobiol. Sci.">
        <title>Raf-like kinases CBC1 and CBC2 negatively regulate stomatal opening by negatively regulating plasma membrane H+-ATPase phosphorylation in Arabidopsis.</title>
        <authorList>
            <person name="Hayashi M."/>
            <person name="Sugimoto H."/>
            <person name="Takahashi H."/>
            <person name="Seki M."/>
            <person name="Shinozaki K."/>
            <person name="Sawasaki T."/>
            <person name="Kinoshita T."/>
            <person name="Inoue S.-I."/>
        </authorList>
    </citation>
    <scope>FUNCTION</scope>
    <scope>DISRUPTION PHENOTYPE</scope>
    <scope>INTERACTION WITH CBC1 AND CBC2</scope>
    <scope>CATALYTIC ACTIVITY</scope>
    <source>
        <strain>cv. Columbia</strain>
    </source>
</reference>
<reference key="21">
    <citation type="journal article" date="2020" name="Plant Physiol.">
        <title>An ATP-binding cassette transporter, ABCB19, regulates leaf position and morphology during phototropin1-mediated blue light responses.</title>
        <authorList>
            <person name="Jenness M.K."/>
            <person name="Tayengwa R."/>
            <person name="Murphy A.S."/>
        </authorList>
    </citation>
    <scope>FUNCTION</scope>
    <scope>DISRUPTION PHENOTYPE</scope>
    <source>
        <strain>cv. Columbia</strain>
        <strain>cv. Columbia GL1</strain>
    </source>
</reference>
<reference key="22">
    <citation type="journal article" date="2008" name="J. Mol. Biol.">
        <title>Structural basis of the LOV1 dimerization of Arabidopsis phototropins 1 and 2.</title>
        <authorList>
            <person name="Nakasako M."/>
            <person name="Zikihara K."/>
            <person name="Matsuoka D."/>
            <person name="Katsura H."/>
            <person name="Tokutomi S."/>
        </authorList>
    </citation>
    <scope>X-RAY CRYSTALLOGRAPHY (2.00 ANGSTROMS) OF 117-246 IN COMPLEX WITH FMN</scope>
    <scope>SUBUNIT</scope>
    <scope>MUTAGENESIS OF THR-217 AND MET-232</scope>
</reference>
<reference key="23">
    <citation type="journal article" date="2012" name="J. Biol. Chem.">
        <title>Structural tuning of the fluorescent protein iLOV for improved photostability.</title>
        <authorList>
            <person name="Christie J.M."/>
            <person name="Hitomi K."/>
            <person name="Arvai A.S."/>
            <person name="Hartfield K.A."/>
            <person name="Mettlen M."/>
            <person name="Pratt A.J."/>
            <person name="Tainer J.A."/>
            <person name="Getzoff E.D."/>
        </authorList>
    </citation>
    <scope>X-RAY CRYSTALLOGRAPHY (1.20 ANGSTROMS) OF 385-496 IN COMPLEX WITH FMN</scope>
    <scope>MUTAGENESIS OF CYS-426</scope>
    <scope>BIOTECHNOLOGY</scope>
</reference>
<reference key="24">
    <citation type="journal article" date="2014" name="J. Am. Chem. Soc.">
        <title>Significant expansion of fluorescent protein sensing ability through the genetic incorporation of superior photo-induced electron-transfer quenchers.</title>
        <authorList>
            <person name="Liu X."/>
            <person name="Jiang L."/>
            <person name="Li J."/>
            <person name="Wang L."/>
            <person name="Yu Y."/>
            <person name="Zhou Q."/>
            <person name="Lv X."/>
            <person name="Gong W."/>
            <person name="Lu Y."/>
            <person name="Wang J."/>
        </authorList>
    </citation>
    <scope>X-RAY CRYSTALLOGRAPHY (1.77 ANGSTROMS) OF 388-496 IN COMPLEX WITH FMN</scope>
    <scope>BIOTECHNOLOGY</scope>
</reference>
<reference key="25">
    <citation type="journal article" date="2019" name="IUCrJ">
        <title>Specific radiation damage is a lesser concern at room temperature.</title>
        <authorList>
            <person name="Gotthard G."/>
            <person name="Aumonier S."/>
            <person name="De Sanctis D."/>
            <person name="Leonard G."/>
            <person name="von Stetten D."/>
            <person name="Royant A."/>
        </authorList>
    </citation>
    <scope>X-RAY CRYSTALLOGRAPHY (1.38 ANGSTROMS) OF 387-507</scope>
    <scope>BIOPHYSICOCHEMICAL PROPERTIES</scope>
</reference>
<reference key="26">
    <citation type="journal article" date="2019" name="Sci. Rep.">
        <title>Tailing miniSOG: structural bases of the complex photophysics of a flavin-binding singlet oxygen photosensitizing protein.</title>
        <authorList>
            <person name="Torra J."/>
            <person name="Lafaye C."/>
            <person name="Signor L."/>
            <person name="Aumonier S."/>
            <person name="Flors C."/>
            <person name="Shu X."/>
            <person name="Nonell S."/>
            <person name="Gotthard G."/>
            <person name="Royant A."/>
        </authorList>
    </citation>
    <scope>X-RAY CRYSTALLOGRAPHY (1.17 ANGSTROMS) OF 387-492</scope>
</reference>
<reference key="27">
    <citation type="journal article" date="2020" name="IUCrJ">
        <title>Millisecond time-resolved serial oscillation crystallography of a blue-light photoreceptor at a synchrotron.</title>
        <authorList>
            <person name="Aumonier S."/>
            <person name="Santoni G."/>
            <person name="Gotthard G."/>
            <person name="von Stetten D."/>
            <person name="Leonard G.A."/>
            <person name="Royant A."/>
        </authorList>
    </citation>
    <scope>X-RAY CRYSTALLOGRAPHY (2.20 ANGSTROMS) OF 387-492</scope>
    <scope>BIOPHYSICOCHEMICAL PROPERTIES</scope>
</reference>
<reference key="28">
    <citation type="journal article" date="2021" name="J. Biol. Chem.">
        <title>The molecular basis of spectral tuning in blue- and red-shifted flavin-binding fluorescent proteins.</title>
        <authorList>
            <person name="Roellen K."/>
            <person name="Granzin J."/>
            <person name="Remeeva A."/>
            <person name="Davari M.D."/>
            <person name="Gensch T."/>
            <person name="Nazarenko V.V."/>
            <person name="Kovalev K."/>
            <person name="Bogorodskiy A."/>
            <person name="Borshchevskiy V."/>
            <person name="Hemmer S."/>
            <person name="Schwaneberg U."/>
            <person name="Gordeliy V."/>
            <person name="Jaeger K.-E."/>
            <person name="Batra-Safferling R."/>
            <person name="Gushchin I."/>
            <person name="Krauss U."/>
        </authorList>
    </citation>
    <scope>X-RAY CRYSTALLOGRAPHY (1.45 ANGSTROMS) OF 387-496</scope>
    <scope>MUTAGENESIS OF VAL-392 AND GLN-489</scope>
    <scope>BIOTECHNOLOGY</scope>
    <scope>BIOPHYSICOCHEMICAL PROPERTIES</scope>
</reference>
<reference key="29">
    <citation type="journal article" date="2022" name="IUCrJ">
        <title>Slow protein dynamics probed by time-resolved oscillation crystallography at room temperature.</title>
        <authorList>
            <person name="Aumonier S."/>
            <person name="Engilberge S."/>
            <person name="Caramello N."/>
            <person name="von Stetten D."/>
            <person name="Gotthard G."/>
            <person name="Leonard G.A."/>
            <person name="Mueller-Dieckmann C."/>
            <person name="Royant A."/>
        </authorList>
    </citation>
    <scope>X-RAY CRYSTALLOGRAPHY (1.59 ANGSTROMS) OF 387-492</scope>
    <scope>BIOPHYSICOCHEMICAL PROPERTIES</scope>
</reference>
<accession>P93025</accession>
<accession>O81204</accession>
<accession>Q8RWE6</accession>